<sequence length="425" mass="48943">MGSPFKDHHTLHPSLVRKLIPWTFYAMVPLVLFRVYLYPYPLHHTTTTILTSSPVSPPPALLEDETSCDYTDGNWVPDRRDPLYNGSTCGTIKEGQSCIAHGRPDMGYLYWRWKPKQCKLPRFEPNTFLQLLRNKHLAFVGDSMARNQLESLLCMLSSVSPPNLVYRDGEENKFRRWYFESHNFSISVYWSPFLVRGVEKSNTGLNHNQLFLDHVDERWAADMNGIDMVVLSIGHWFLHPAVYYEGDQVLGCHYCPDLNHTEIGFYDILRKAIKTTLKALVDRKGPNDNGFDALVTTFSPAHFEGDWDKLGACPKTEPCKEGEKTLEGMDAEMRQVEVEEVEAAKMNSVQLEKFRLEALDVSKLSLMRPDGHPGPYMHPFPFAYGVAERVQNDCVHWCLPGPIDTWNEILLEVIKKWEYASRREQ</sequence>
<name>XGAT2_POPTR</name>
<keyword id="KW-1015">Disulfide bond</keyword>
<keyword id="KW-0325">Glycoprotein</keyword>
<keyword id="KW-0333">Golgi apparatus</keyword>
<keyword id="KW-0472">Membrane</keyword>
<keyword id="KW-1185">Reference proteome</keyword>
<keyword id="KW-0735">Signal-anchor</keyword>
<keyword id="KW-0808">Transferase</keyword>
<keyword id="KW-0812">Transmembrane</keyword>
<keyword id="KW-1133">Transmembrane helix</keyword>
<organism>
    <name type="scientific">Populus trichocarpa</name>
    <name type="common">Western balsam poplar</name>
    <name type="synonym">Populus balsamifera subsp. trichocarpa</name>
    <dbReference type="NCBI Taxonomy" id="3694"/>
    <lineage>
        <taxon>Eukaryota</taxon>
        <taxon>Viridiplantae</taxon>
        <taxon>Streptophyta</taxon>
        <taxon>Embryophyta</taxon>
        <taxon>Tracheophyta</taxon>
        <taxon>Spermatophyta</taxon>
        <taxon>Magnoliopsida</taxon>
        <taxon>eudicotyledons</taxon>
        <taxon>Gunneridae</taxon>
        <taxon>Pentapetalae</taxon>
        <taxon>rosids</taxon>
        <taxon>fabids</taxon>
        <taxon>Malpighiales</taxon>
        <taxon>Salicaceae</taxon>
        <taxon>Saliceae</taxon>
        <taxon>Populus</taxon>
    </lineage>
</organism>
<feature type="chain" id="PRO_0000453955" description="Xyloglucan O-acetyltransferase 2">
    <location>
        <begin position="1"/>
        <end position="425"/>
    </location>
</feature>
<feature type="topological domain" description="Cytoplasmic" evidence="6">
    <location>
        <begin position="1"/>
        <end position="18"/>
    </location>
</feature>
<feature type="transmembrane region" description="Helical; Signal-anchor for type II membrane protein" evidence="2">
    <location>
        <begin position="19"/>
        <end position="38"/>
    </location>
</feature>
<feature type="topological domain" description="Lumenal" evidence="6">
    <location>
        <begin position="39"/>
        <end position="425"/>
    </location>
</feature>
<feature type="short sequence motif" description="GDS motif" evidence="7">
    <location>
        <begin position="141"/>
        <end position="143"/>
    </location>
</feature>
<feature type="short sequence motif" description="DXXH motif" evidence="7">
    <location>
        <begin position="393"/>
        <end position="396"/>
    </location>
</feature>
<feature type="active site" description="Nucleophile" evidence="1">
    <location>
        <position position="143"/>
    </location>
</feature>
<feature type="active site" description="Proton donor" evidence="1">
    <location>
        <position position="393"/>
    </location>
</feature>
<feature type="active site" description="Proton acceptor" evidence="1">
    <location>
        <position position="396"/>
    </location>
</feature>
<feature type="glycosylation site" description="N-linked (GlcNAc...) asparagine" evidence="3">
    <location>
        <position position="85"/>
    </location>
</feature>
<feature type="glycosylation site" description="N-linked (GlcNAc...) asparagine" evidence="3">
    <location>
        <position position="183"/>
    </location>
</feature>
<feature type="glycosylation site" description="N-linked (GlcNAc...) asparagine" evidence="3">
    <location>
        <position position="259"/>
    </location>
</feature>
<feature type="disulfide bond" evidence="1">
    <location>
        <begin position="68"/>
        <end position="118"/>
    </location>
</feature>
<feature type="disulfide bond" evidence="1">
    <location>
        <begin position="89"/>
        <end position="154"/>
    </location>
</feature>
<feature type="disulfide bond" evidence="1">
    <location>
        <begin position="98"/>
        <end position="398"/>
    </location>
</feature>
<feature type="disulfide bond" evidence="1">
    <location>
        <begin position="313"/>
        <end position="394"/>
    </location>
</feature>
<protein>
    <recommendedName>
        <fullName evidence="5">Xyloglucan O-acetyltransferase 2</fullName>
        <shortName evidence="5">PtrXGOAT2</shortName>
        <ecNumber evidence="4">2.3.1.-</ecNumber>
    </recommendedName>
</protein>
<proteinExistence type="evidence at protein level"/>
<evidence type="ECO:0000250" key="1">
    <source>
        <dbReference type="UniProtKB" id="Q9LY46"/>
    </source>
</evidence>
<evidence type="ECO:0000255" key="2"/>
<evidence type="ECO:0000255" key="3">
    <source>
        <dbReference type="PROSITE-ProRule" id="PRU00498"/>
    </source>
</evidence>
<evidence type="ECO:0000269" key="4">
    <source>
    </source>
</evidence>
<evidence type="ECO:0000303" key="5">
    <source>
    </source>
</evidence>
<evidence type="ECO:0000305" key="6"/>
<evidence type="ECO:0000305" key="7">
    <source>
    </source>
</evidence>
<evidence type="ECO:0000312" key="8">
    <source>
        <dbReference type="EMBL" id="PNT15635.1"/>
    </source>
</evidence>
<gene>
    <name evidence="5" type="primary">XGOAT2</name>
    <name evidence="8" type="ORF">POPTR_010G095700</name>
</gene>
<accession>B9HVC2</accession>
<dbReference type="EC" id="2.3.1.-" evidence="4"/>
<dbReference type="EMBL" id="MH568691">
    <property type="protein sequence ID" value="AXN57019.1"/>
    <property type="molecule type" value="mRNA"/>
</dbReference>
<dbReference type="EMBL" id="CM009299">
    <property type="protein sequence ID" value="PNT15635.1"/>
    <property type="molecule type" value="Genomic_DNA"/>
</dbReference>
<dbReference type="RefSeq" id="XP_002314730.1">
    <property type="nucleotide sequence ID" value="XM_002314694.2"/>
</dbReference>
<dbReference type="SMR" id="B9HVC2"/>
<dbReference type="FunCoup" id="B9HVC2">
    <property type="interactions" value="1"/>
</dbReference>
<dbReference type="STRING" id="3694.B9HVC2"/>
<dbReference type="GlyCosmos" id="B9HVC2">
    <property type="glycosylation" value="3 sites, No reported glycans"/>
</dbReference>
<dbReference type="GeneID" id="7459060"/>
<dbReference type="KEGG" id="pop:7459060"/>
<dbReference type="eggNOG" id="ENOG502QQXW">
    <property type="taxonomic scope" value="Eukaryota"/>
</dbReference>
<dbReference type="HOGENOM" id="CLU_020953_6_0_1"/>
<dbReference type="InParanoid" id="B9HVC2"/>
<dbReference type="OrthoDB" id="630188at2759"/>
<dbReference type="Proteomes" id="UP000006729">
    <property type="component" value="Chromosome 10"/>
</dbReference>
<dbReference type="GO" id="GO:0005794">
    <property type="term" value="C:Golgi apparatus"/>
    <property type="evidence" value="ECO:0000318"/>
    <property type="project" value="GO_Central"/>
</dbReference>
<dbReference type="GO" id="GO:0000139">
    <property type="term" value="C:Golgi membrane"/>
    <property type="evidence" value="ECO:0007669"/>
    <property type="project" value="UniProtKB-SubCell"/>
</dbReference>
<dbReference type="GO" id="GO:0016413">
    <property type="term" value="F:O-acetyltransferase activity"/>
    <property type="evidence" value="ECO:0000318"/>
    <property type="project" value="GO_Central"/>
</dbReference>
<dbReference type="GO" id="GO:1990538">
    <property type="term" value="F:xylan O-acetyltransferase activity"/>
    <property type="evidence" value="ECO:0000314"/>
    <property type="project" value="UniProtKB"/>
</dbReference>
<dbReference type="GO" id="GO:1990937">
    <property type="term" value="P:xylan acetylation"/>
    <property type="evidence" value="ECO:0000314"/>
    <property type="project" value="UniProtKB"/>
</dbReference>
<dbReference type="InterPro" id="IPR029962">
    <property type="entry name" value="TBL"/>
</dbReference>
<dbReference type="InterPro" id="IPR026057">
    <property type="entry name" value="TBL_C"/>
</dbReference>
<dbReference type="InterPro" id="IPR025846">
    <property type="entry name" value="TBL_N"/>
</dbReference>
<dbReference type="PANTHER" id="PTHR32285">
    <property type="entry name" value="PROTEIN TRICHOME BIREFRINGENCE-LIKE 9-RELATED"/>
    <property type="match status" value="1"/>
</dbReference>
<dbReference type="PANTHER" id="PTHR32285:SF57">
    <property type="entry name" value="XYLOGLUCAN O-ACETYLTRANSFERASE 1"/>
    <property type="match status" value="1"/>
</dbReference>
<dbReference type="Pfam" id="PF13839">
    <property type="entry name" value="PC-Esterase"/>
    <property type="match status" value="1"/>
</dbReference>
<dbReference type="Pfam" id="PF14416">
    <property type="entry name" value="PMR5N"/>
    <property type="match status" value="1"/>
</dbReference>
<comment type="function">
    <text evidence="4">Xyloglucan acetyltransferase that catalyzes the acetylation of fucosylated Gal residues on xyloglucan side chains (PubMed:30083810). Predominantly catalyze 6-O-monoacetylation of Gal residues in the Fuc-Gal-Xyl trisaccharide side chains of xyloglucan oligomers (PubMed:30083810).</text>
</comment>
<comment type="biophysicochemical properties">
    <kinetics>
        <KM evidence="4">2.24 mM for xyloglucan oligomer</KM>
        <Vmax evidence="4">60.0 pmol/min/mg enzyme with xyloglucan oligomer as substrate</Vmax>
    </kinetics>
</comment>
<comment type="subcellular location">
    <subcellularLocation>
        <location evidence="6">Golgi apparatus membrane</location>
        <topology evidence="6">Single-pass type II membrane protein</topology>
    </subcellularLocation>
</comment>
<comment type="similarity">
    <text evidence="6">Belongs to the PC-esterase family. TBL subfamily.</text>
</comment>
<reference key="1">
    <citation type="journal article" date="2018" name="Planta">
        <title>Xyloglucan O-acetyltransferases from Arabidopsis thaliana and Populus trichocarpa catalyze acetylation of fucosylated galactose residues on xyloglucan side chains.</title>
        <authorList>
            <person name="Zhong R."/>
            <person name="Cui D."/>
            <person name="Ye Z.H."/>
        </authorList>
    </citation>
    <scope>NUCLEOTIDE SEQUENCE [MRNA]</scope>
    <scope>FUNCTION</scope>
    <scope>CATALYTIC ACTIVITY</scope>
    <scope>BIOPHYSICOCHEMICAL PROPERTIES</scope>
</reference>
<reference key="2">
    <citation type="journal article" date="2006" name="Science">
        <title>The genome of black cottonwood, Populus trichocarpa (Torr. &amp; Gray).</title>
        <authorList>
            <person name="Tuskan G.A."/>
            <person name="Difazio S."/>
            <person name="Jansson S."/>
            <person name="Bohlmann J."/>
            <person name="Grigoriev I."/>
            <person name="Hellsten U."/>
            <person name="Putnam N."/>
            <person name="Ralph S."/>
            <person name="Rombauts S."/>
            <person name="Salamov A."/>
            <person name="Schein J."/>
            <person name="Sterck L."/>
            <person name="Aerts A."/>
            <person name="Bhalerao R.R."/>
            <person name="Bhalerao R.P."/>
            <person name="Blaudez D."/>
            <person name="Boerjan W."/>
            <person name="Brun A."/>
            <person name="Brunner A."/>
            <person name="Busov V."/>
            <person name="Campbell M."/>
            <person name="Carlson J."/>
            <person name="Chalot M."/>
            <person name="Chapman J."/>
            <person name="Chen G.-L."/>
            <person name="Cooper D."/>
            <person name="Coutinho P.M."/>
            <person name="Couturier J."/>
            <person name="Covert S."/>
            <person name="Cronk Q."/>
            <person name="Cunningham R."/>
            <person name="Davis J."/>
            <person name="Degroeve S."/>
            <person name="Dejardin A."/>
            <person name="dePamphilis C.W."/>
            <person name="Detter J."/>
            <person name="Dirks B."/>
            <person name="Dubchak I."/>
            <person name="Duplessis S."/>
            <person name="Ehlting J."/>
            <person name="Ellis B."/>
            <person name="Gendler K."/>
            <person name="Goodstein D."/>
            <person name="Gribskov M."/>
            <person name="Grimwood J."/>
            <person name="Groover A."/>
            <person name="Gunter L."/>
            <person name="Hamberger B."/>
            <person name="Heinze B."/>
            <person name="Helariutta Y."/>
            <person name="Henrissat B."/>
            <person name="Holligan D."/>
            <person name="Holt R."/>
            <person name="Huang W."/>
            <person name="Islam-Faridi N."/>
            <person name="Jones S."/>
            <person name="Jones-Rhoades M."/>
            <person name="Jorgensen R."/>
            <person name="Joshi C."/>
            <person name="Kangasjaervi J."/>
            <person name="Karlsson J."/>
            <person name="Kelleher C."/>
            <person name="Kirkpatrick R."/>
            <person name="Kirst M."/>
            <person name="Kohler A."/>
            <person name="Kalluri U."/>
            <person name="Larimer F."/>
            <person name="Leebens-Mack J."/>
            <person name="Leple J.-C."/>
            <person name="Locascio P."/>
            <person name="Lou Y."/>
            <person name="Lucas S."/>
            <person name="Martin F."/>
            <person name="Montanini B."/>
            <person name="Napoli C."/>
            <person name="Nelson D.R."/>
            <person name="Nelson C."/>
            <person name="Nieminen K."/>
            <person name="Nilsson O."/>
            <person name="Pereda V."/>
            <person name="Peter G."/>
            <person name="Philippe R."/>
            <person name="Pilate G."/>
            <person name="Poliakov A."/>
            <person name="Razumovskaya J."/>
            <person name="Richardson P."/>
            <person name="Rinaldi C."/>
            <person name="Ritland K."/>
            <person name="Rouze P."/>
            <person name="Ryaboy D."/>
            <person name="Schmutz J."/>
            <person name="Schrader J."/>
            <person name="Segerman B."/>
            <person name="Shin H."/>
            <person name="Siddiqui A."/>
            <person name="Sterky F."/>
            <person name="Terry A."/>
            <person name="Tsai C.-J."/>
            <person name="Uberbacher E."/>
            <person name="Unneberg P."/>
            <person name="Vahala J."/>
            <person name="Wall K."/>
            <person name="Wessler S."/>
            <person name="Yang G."/>
            <person name="Yin T."/>
            <person name="Douglas C."/>
            <person name="Marra M."/>
            <person name="Sandberg G."/>
            <person name="Van de Peer Y."/>
            <person name="Rokhsar D.S."/>
        </authorList>
    </citation>
    <scope>NUCLEOTIDE SEQUENCE [LARGE SCALE GENOMIC DNA]</scope>
    <source>
        <strain>cv. Nisqually</strain>
    </source>
</reference>